<feature type="chain" id="PRO_0000115369" description="Small ribosomal subunit protein uS15">
    <location>
        <begin position="1"/>
        <end position="89"/>
    </location>
</feature>
<organism>
    <name type="scientific">Nostoc sp. (strain PCC 7120 / SAG 25.82 / UTEX 2576)</name>
    <dbReference type="NCBI Taxonomy" id="103690"/>
    <lineage>
        <taxon>Bacteria</taxon>
        <taxon>Bacillati</taxon>
        <taxon>Cyanobacteriota</taxon>
        <taxon>Cyanophyceae</taxon>
        <taxon>Nostocales</taxon>
        <taxon>Nostocaceae</taxon>
        <taxon>Nostoc</taxon>
    </lineage>
</organism>
<gene>
    <name evidence="1" type="primary">rpsO</name>
    <name evidence="1" type="synonym">rps15</name>
    <name type="ordered locus">asl0749</name>
</gene>
<proteinExistence type="inferred from homology"/>
<keyword id="KW-1185">Reference proteome</keyword>
<keyword id="KW-0687">Ribonucleoprotein</keyword>
<keyword id="KW-0689">Ribosomal protein</keyword>
<keyword id="KW-0694">RNA-binding</keyword>
<keyword id="KW-0699">rRNA-binding</keyword>
<accession>Q8YYU7</accession>
<sequence length="89" mass="10294">MALTQQRKQEIINNYQVHGTDTGSTDVQIAMLTERINRLSEHLQANKKDHSSRRGLLKLIGHRKRLLAYLQQESREKYQALIGRLGIRG</sequence>
<dbReference type="EMBL" id="BA000019">
    <property type="protein sequence ID" value="BAB72706.1"/>
    <property type="molecule type" value="Genomic_DNA"/>
</dbReference>
<dbReference type="PIR" id="AC1900">
    <property type="entry name" value="AC1900"/>
</dbReference>
<dbReference type="RefSeq" id="WP_010994923.1">
    <property type="nucleotide sequence ID" value="NZ_RSCN01000006.1"/>
</dbReference>
<dbReference type="SMR" id="Q8YYU7"/>
<dbReference type="STRING" id="103690.gene:10492760"/>
<dbReference type="KEGG" id="ana:asl0749"/>
<dbReference type="eggNOG" id="COG0184">
    <property type="taxonomic scope" value="Bacteria"/>
</dbReference>
<dbReference type="OrthoDB" id="9799262at2"/>
<dbReference type="Proteomes" id="UP000002483">
    <property type="component" value="Chromosome"/>
</dbReference>
<dbReference type="GO" id="GO:0022627">
    <property type="term" value="C:cytosolic small ribosomal subunit"/>
    <property type="evidence" value="ECO:0007669"/>
    <property type="project" value="TreeGrafter"/>
</dbReference>
<dbReference type="GO" id="GO:0019843">
    <property type="term" value="F:rRNA binding"/>
    <property type="evidence" value="ECO:0007669"/>
    <property type="project" value="UniProtKB-UniRule"/>
</dbReference>
<dbReference type="GO" id="GO:0003735">
    <property type="term" value="F:structural constituent of ribosome"/>
    <property type="evidence" value="ECO:0007669"/>
    <property type="project" value="InterPro"/>
</dbReference>
<dbReference type="GO" id="GO:0006412">
    <property type="term" value="P:translation"/>
    <property type="evidence" value="ECO:0007669"/>
    <property type="project" value="UniProtKB-UniRule"/>
</dbReference>
<dbReference type="CDD" id="cd00353">
    <property type="entry name" value="Ribosomal_S15p_S13e"/>
    <property type="match status" value="1"/>
</dbReference>
<dbReference type="FunFam" id="1.10.287.10:FF:000002">
    <property type="entry name" value="30S ribosomal protein S15"/>
    <property type="match status" value="1"/>
</dbReference>
<dbReference type="Gene3D" id="6.10.250.3130">
    <property type="match status" value="1"/>
</dbReference>
<dbReference type="Gene3D" id="1.10.287.10">
    <property type="entry name" value="S15/NS1, RNA-binding"/>
    <property type="match status" value="1"/>
</dbReference>
<dbReference type="HAMAP" id="MF_01343_B">
    <property type="entry name" value="Ribosomal_uS15_B"/>
    <property type="match status" value="1"/>
</dbReference>
<dbReference type="InterPro" id="IPR000589">
    <property type="entry name" value="Ribosomal_uS15"/>
</dbReference>
<dbReference type="InterPro" id="IPR005290">
    <property type="entry name" value="Ribosomal_uS15_bac-type"/>
</dbReference>
<dbReference type="InterPro" id="IPR009068">
    <property type="entry name" value="uS15_NS1_RNA-bd_sf"/>
</dbReference>
<dbReference type="NCBIfam" id="TIGR00952">
    <property type="entry name" value="S15_bact"/>
    <property type="match status" value="1"/>
</dbReference>
<dbReference type="PANTHER" id="PTHR23321">
    <property type="entry name" value="RIBOSOMAL PROTEIN S15, BACTERIAL AND ORGANELLAR"/>
    <property type="match status" value="1"/>
</dbReference>
<dbReference type="PANTHER" id="PTHR23321:SF26">
    <property type="entry name" value="SMALL RIBOSOMAL SUBUNIT PROTEIN US15M"/>
    <property type="match status" value="1"/>
</dbReference>
<dbReference type="Pfam" id="PF00312">
    <property type="entry name" value="Ribosomal_S15"/>
    <property type="match status" value="1"/>
</dbReference>
<dbReference type="SMART" id="SM01387">
    <property type="entry name" value="Ribosomal_S15"/>
    <property type="match status" value="1"/>
</dbReference>
<dbReference type="SUPFAM" id="SSF47060">
    <property type="entry name" value="S15/NS1 RNA-binding domain"/>
    <property type="match status" value="1"/>
</dbReference>
<dbReference type="PROSITE" id="PS00362">
    <property type="entry name" value="RIBOSOMAL_S15"/>
    <property type="match status" value="1"/>
</dbReference>
<protein>
    <recommendedName>
        <fullName evidence="1">Small ribosomal subunit protein uS15</fullName>
    </recommendedName>
    <alternativeName>
        <fullName evidence="2">30S ribosomal protein S15</fullName>
    </alternativeName>
</protein>
<reference key="1">
    <citation type="journal article" date="2001" name="DNA Res.">
        <title>Complete genomic sequence of the filamentous nitrogen-fixing cyanobacterium Anabaena sp. strain PCC 7120.</title>
        <authorList>
            <person name="Kaneko T."/>
            <person name="Nakamura Y."/>
            <person name="Wolk C.P."/>
            <person name="Kuritz T."/>
            <person name="Sasamoto S."/>
            <person name="Watanabe A."/>
            <person name="Iriguchi M."/>
            <person name="Ishikawa A."/>
            <person name="Kawashima K."/>
            <person name="Kimura T."/>
            <person name="Kishida Y."/>
            <person name="Kohara M."/>
            <person name="Matsumoto M."/>
            <person name="Matsuno A."/>
            <person name="Muraki A."/>
            <person name="Nakazaki N."/>
            <person name="Shimpo S."/>
            <person name="Sugimoto M."/>
            <person name="Takazawa M."/>
            <person name="Yamada M."/>
            <person name="Yasuda M."/>
            <person name="Tabata S."/>
        </authorList>
    </citation>
    <scope>NUCLEOTIDE SEQUENCE [LARGE SCALE GENOMIC DNA]</scope>
    <source>
        <strain>PCC 7120 / SAG 25.82 / UTEX 2576</strain>
    </source>
</reference>
<name>RS15_NOSS1</name>
<comment type="function">
    <text evidence="1">One of the primary rRNA binding proteins, it binds directly to 16S rRNA where it helps nucleate assembly of the platform of the 30S subunit by binding and bridging several RNA helices of the 16S rRNA.</text>
</comment>
<comment type="function">
    <text evidence="1">Forms an intersubunit bridge (bridge B4) with the 23S rRNA of the 50S subunit in the ribosome.</text>
</comment>
<comment type="subunit">
    <text evidence="1">Part of the 30S ribosomal subunit. Forms a bridge to the 50S subunit in the 70S ribosome, contacting the 23S rRNA.</text>
</comment>
<comment type="similarity">
    <text evidence="1">Belongs to the universal ribosomal protein uS15 family.</text>
</comment>
<evidence type="ECO:0000255" key="1">
    <source>
        <dbReference type="HAMAP-Rule" id="MF_01343"/>
    </source>
</evidence>
<evidence type="ECO:0000305" key="2"/>